<sequence>MNKDLKGLYAALLVPFDENGQVNEQGLKQIAQNAIETEELDGLYVNGSSGENFLLNTEQKKQVFKVAKEAVGDKVKLIAQVGSLDLNEAIELGKYATELGYDALSAVTPFYYPFTFEEIRDYYFDIIEATQNNMIIYAIPDLTGVNISIEQFSELFNHEKIVGVKYTAPNFFLLERIRKAFPDKLILSGFDEMLVQATISGVDGAIGSTYNVNGRRARKIFDLARQGQIQEAYQLQHDSNDIIETVLSMGIYPTLKEILRHRGIDAGLPKRPFKPFNEAHRQTLDQLIAKYDL</sequence>
<reference key="1">
    <citation type="book" date="2006" name="Gram positive pathogens, 2nd edition">
        <title>The Staphylococcus aureus NCTC 8325 genome.</title>
        <editorList>
            <person name="Fischetti V."/>
            <person name="Novick R."/>
            <person name="Ferretti J."/>
            <person name="Portnoy D."/>
            <person name="Rood J."/>
        </editorList>
        <authorList>
            <person name="Gillaspy A.F."/>
            <person name="Worrell V."/>
            <person name="Orvis J."/>
            <person name="Roe B.A."/>
            <person name="Dyer D.W."/>
            <person name="Iandolo J.J."/>
        </authorList>
    </citation>
    <scope>NUCLEOTIDE SEQUENCE [LARGE SCALE GENOMIC DNA]</scope>
    <source>
        <strain>NCTC 8325 / PS 47</strain>
    </source>
</reference>
<reference evidence="8 9 10 11 12" key="2">
    <citation type="journal article" date="2013" name="ChemBioChem">
        <title>Structural insights into the recovery of aldolase activity in N-acetylneuraminic acid lyase by replacement of the catalytically active lysine with gamma-thialysine by using a chemical mutagenesis strategy.</title>
        <authorList>
            <person name="Timms N."/>
            <person name="Windle C.L."/>
            <person name="Polyakova A."/>
            <person name="Ault J.R."/>
            <person name="Trinh C.H."/>
            <person name="Pearson A.R."/>
            <person name="Nelson A."/>
            <person name="Berry A."/>
        </authorList>
    </citation>
    <scope>X-RAY CRYSTALLOGRAPHY (1.95 ANGSTROMS) OF APOENZYME</scope>
    <scope>WILD-TYPE AND MUTANTS CYS-165 AND GAMMA-THIALYSINE-165 IN COMPLEX WITH PYRUVATE</scope>
    <scope>FUNCTION</scope>
    <scope>CATALYTIC ACTIVITY</scope>
    <scope>BIOPHYSICOCHEMICAL PROPERTIES</scope>
    <scope>SUBUNIT</scope>
    <scope>MUTAGENESIS OF LYS-165</scope>
    <scope>ACTIVE SITE</scope>
    <source>
        <strain>NCTC 8325 / PS 47</strain>
    </source>
</reference>
<reference evidence="14 15" key="3">
    <citation type="journal article" date="2016" name="FEBS Lett.">
        <title>Structure and inhibition of N-acetylneuraminate lyase from methicillin-resistant Staphylococcus aureus.</title>
        <authorList>
            <person name="North R.A."/>
            <person name="Watson A.J."/>
            <person name="Pearce F.G."/>
            <person name="Muscroft-Taylor A.C."/>
            <person name="Friemann R."/>
            <person name="Fairbanks A.J."/>
            <person name="Dobson R.C."/>
        </authorList>
    </citation>
    <scope>X-RAY CRYSTALLOGRAPHY (1.74 ANGSTROMS) OF APOENZYME AND IN COMPLEX WITH SIALIC ACID ALDITOL</scope>
    <scope>FUNCTION</scope>
    <scope>CATALYTIC ACTIVITY</scope>
    <scope>ACTIVITY REGULATION</scope>
    <scope>BIOPHYSICOCHEMICAL PROPERTIES</scope>
    <scope>SUBUNIT</scope>
    <source>
        <strain>MRSA</strain>
    </source>
</reference>
<reference evidence="13" key="4">
    <citation type="journal article" date="2016" name="Org. Biomol. Chem.">
        <title>Evaluation of fluoropyruvate as nucleophile in reactions catalysed by N-acetyl neuraminic acid lyase variants: scope, limitations and stereoselectivity.</title>
        <authorList>
            <person name="Stockwell J."/>
            <person name="Daniels A.D."/>
            <person name="Windle C.L."/>
            <person name="Harman T.A."/>
            <person name="Woodhall T."/>
            <person name="Lebl T."/>
            <person name="Trinh C.H."/>
            <person name="Mulholland K."/>
            <person name="Pearson A.R."/>
            <person name="Berry A."/>
            <person name="Nelson A."/>
        </authorList>
    </citation>
    <scope>X-RAY CRYSTALLOGRAPHY (1.72 ANGSTROMS) OF 2-293 IN COMPLEX WITH FLUOROPYRUVATE</scope>
    <scope>FUNCTION</scope>
    <scope>BIOPHYSICOCHEMICAL PROPERTIES</scope>
    <scope>MUTAGENESIS OF GLU-192</scope>
</reference>
<reference evidence="16" key="5">
    <citation type="journal article" date="2017" name="Proc. Natl. Acad. Sci. U.S.A.">
        <title>Extending enzyme molecular recognition with an expanded amino acid alphabet.</title>
        <authorList>
            <person name="Windle C.L."/>
            <person name="Simmons K.J."/>
            <person name="Ault J.R."/>
            <person name="Trinh C.H."/>
            <person name="Nelson A."/>
            <person name="Pearson A.R."/>
            <person name="Berry A."/>
        </authorList>
    </citation>
    <scope>X-RAY CRYSTALLOGRAPHY (1.70 ANGSTROMS) OF 2-293 OF MUTANT 2,3-DIHYDROXYPROPYL CYSTEINE-190 IN COMPLEX WITH FLUOROPYRUVATE</scope>
    <scope>BIOPHYSICOCHEMICAL PROPERTIES</scope>
    <scope>BIOTECHNOLOGY</scope>
</reference>
<evidence type="ECO:0000255" key="1">
    <source>
        <dbReference type="HAMAP-Rule" id="MF_01237"/>
    </source>
</evidence>
<evidence type="ECO:0000269" key="2">
    <source>
    </source>
</evidence>
<evidence type="ECO:0000269" key="3">
    <source>
    </source>
</evidence>
<evidence type="ECO:0000269" key="4">
    <source>
    </source>
</evidence>
<evidence type="ECO:0000269" key="5">
    <source>
    </source>
</evidence>
<evidence type="ECO:0000303" key="6">
    <source>
    </source>
</evidence>
<evidence type="ECO:0000305" key="7">
    <source>
    </source>
</evidence>
<evidence type="ECO:0007744" key="8">
    <source>
        <dbReference type="PDB" id="4AH7"/>
    </source>
</evidence>
<evidence type="ECO:0007744" key="9">
    <source>
        <dbReference type="PDB" id="4AHO"/>
    </source>
</evidence>
<evidence type="ECO:0007744" key="10">
    <source>
        <dbReference type="PDB" id="4AHP"/>
    </source>
</evidence>
<evidence type="ECO:0007744" key="11">
    <source>
        <dbReference type="PDB" id="4AHQ"/>
    </source>
</evidence>
<evidence type="ECO:0007744" key="12">
    <source>
        <dbReference type="PDB" id="4AMA"/>
    </source>
</evidence>
<evidence type="ECO:0007744" key="13">
    <source>
        <dbReference type="PDB" id="5A8G"/>
    </source>
</evidence>
<evidence type="ECO:0007744" key="14">
    <source>
        <dbReference type="PDB" id="5KZD"/>
    </source>
</evidence>
<evidence type="ECO:0007744" key="15">
    <source>
        <dbReference type="PDB" id="5KZE"/>
    </source>
</evidence>
<evidence type="ECO:0007744" key="16">
    <source>
        <dbReference type="PDB" id="5LKY"/>
    </source>
</evidence>
<evidence type="ECO:0007829" key="17">
    <source>
        <dbReference type="PDB" id="5A8G"/>
    </source>
</evidence>
<evidence type="ECO:0007829" key="18">
    <source>
        <dbReference type="PDB" id="5LKY"/>
    </source>
</evidence>
<gene>
    <name evidence="1 6" type="primary">nanA</name>
    <name type="ordered locus">SAOUHSC_00295</name>
</gene>
<protein>
    <recommendedName>
        <fullName evidence="1 6">N-acetylneuraminate lyase</fullName>
        <shortName evidence="1 6">NAL</shortName>
        <shortName evidence="1 6">Neu5Ac lyase</shortName>
        <ecNumber evidence="1 2 4">4.1.3.3</ecNumber>
    </recommendedName>
    <alternativeName>
        <fullName evidence="1">N-acetylneuraminate pyruvate-lyase</fullName>
    </alternativeName>
    <alternativeName>
        <fullName evidence="1">N-acetylneuraminic acid aldolase</fullName>
    </alternativeName>
    <alternativeName>
        <fullName evidence="1">Sialate lyase</fullName>
    </alternativeName>
    <alternativeName>
        <fullName evidence="1">Sialic acid aldolase</fullName>
    </alternativeName>
    <alternativeName>
        <fullName evidence="1">Sialic acid lyase</fullName>
    </alternativeName>
</protein>
<proteinExistence type="evidence at protein level"/>
<comment type="function">
    <text evidence="2 3 4">Catalyzes the reversible aldol cleavage of N-acetylneuraminic acid (sialic acid; Neu5Ac) to form pyruvate and N-acetylmannosamine (ManNAc) via a Schiff base intermediate (PubMed:23418011, PubMed:27943302). In vitro, catalyzes the reaction between fluoropyruvate and ManNAc, albeit much less efficiently than with pyruvate as donor, leading to the synthesis of fluorinated analogs of N-acetylneuraminic acid (PubMed:26537532). Variants are useful catalysts of reactions between fluoropyruvate and unnatural aldehyde substrates (PubMed:26537532).</text>
</comment>
<comment type="catalytic activity">
    <reaction evidence="1 2 4">
        <text>aceneuramate = aldehydo-N-acetyl-D-mannosamine + pyruvate</text>
        <dbReference type="Rhea" id="RHEA:23296"/>
        <dbReference type="ChEBI" id="CHEBI:15361"/>
        <dbReference type="ChEBI" id="CHEBI:17122"/>
        <dbReference type="ChEBI" id="CHEBI:173083"/>
        <dbReference type="EC" id="4.1.3.3"/>
    </reaction>
</comment>
<comment type="activity regulation">
    <text evidence="4">Strongly inhibited by sialic acid alditol.</text>
</comment>
<comment type="biophysicochemical properties">
    <kinetics>
        <KM evidence="2">2.2 mM for N-acetylneuraminate (at pH 7.4)</KM>
        <KM evidence="2">2.4 mM for N-acetylneuraminate (at pH 6.8)</KM>
        <KM evidence="4">3.2 mM for N-acetylneuraminate</KM>
        <KM evidence="3">2 mM for N-acetylneuraminate</KM>
        <KM evidence="5">3.1 mM for ManNAc (for the aldol condensation of ManNAc and pyruvate)</KM>
        <KM evidence="5">3 mM for erythrose (for the aldol condensation of erythrose and pyruvate)</KM>
        <Vmax evidence="4">40.0 umol/min/mg enzyme</Vmax>
        <text evidence="2 3 4 5">kcat is 250 min(-1) for the cleavage of Neu5Ac at pH 7.4, and is 260 min(-1) at pH 6.8 (PubMed:23418011). kcat is 22.1 sec(-1) with N-acetylneuraminate as substrate (PubMed:27943302). kcat is 510 min(-1) with N-acetylneuraminate as substrate (PubMed:26537532). kcat is 0.8 min(-1) with ManNAc as substrate (for the aldol condensation of ManNAc and pyruvate) (PubMed:28196894). kcat is 0.5 min(-1) with erythrose as substrate (for the aldol condensation of erythrose and pyruvate) (PubMed:28196894).</text>
    </kinetics>
    <phDependence>
        <text evidence="2">Optimum pH is 7.4.</text>
    </phDependence>
</comment>
<comment type="pathway">
    <text evidence="1">Amino-sugar metabolism; N-acetylneuraminate degradation; D-fructose 6-phosphate from N-acetylneuraminate: step 1/5.</text>
</comment>
<comment type="subunit">
    <text evidence="1 2 4">Homotetramer.</text>
</comment>
<comment type="subcellular location">
    <subcellularLocation>
        <location evidence="1">Cytoplasm</location>
    </subcellularLocation>
</comment>
<comment type="biotechnology">
    <text evidence="5">Introduction of a non-canonical amino acid into the protein alters the substrate specificity of the enzyme and achieves levels of activity toward a new substrate that are otherwise unattainable by mutagenesis to any of the canonical amino acids (PubMed:28196894). By modifying Phe-190 to a 2,3-dihydroxypropyl cysteine, the formation of 3-deoxy-2-heptulosonic acid (DHA) from erythrose and pyruvate is significantly increased (PubMed:28196894).</text>
</comment>
<comment type="miscellaneous">
    <text evidence="2">When the catalytic Lys-165 residue is replaced by the unnatural amino acid gamma-thialysine, the enzyme regains significant activity compared with the Cys-165 mutant; regains of approximately 17% of the wild-type catalytic efficiency.</text>
</comment>
<comment type="similarity">
    <text evidence="1">Belongs to the DapA family. NanA subfamily.</text>
</comment>
<name>NANA_STAA8</name>
<accession>Q2G160</accession>
<dbReference type="EC" id="4.1.3.3" evidence="1 2 4"/>
<dbReference type="EMBL" id="CP000253">
    <property type="protein sequence ID" value="ABD29464.1"/>
    <property type="molecule type" value="Genomic_DNA"/>
</dbReference>
<dbReference type="RefSeq" id="WP_001030738.1">
    <property type="nucleotide sequence ID" value="NZ_LS483365.1"/>
</dbReference>
<dbReference type="RefSeq" id="YP_498885.1">
    <property type="nucleotide sequence ID" value="NC_007795.1"/>
</dbReference>
<dbReference type="PDB" id="4AH7">
    <property type="method" value="X-ray"/>
    <property type="resolution" value="2.30 A"/>
    <property type="chains" value="A/B/C/D=2-293"/>
</dbReference>
<dbReference type="PDB" id="4AHO">
    <property type="method" value="X-ray"/>
    <property type="resolution" value="2.00 A"/>
    <property type="chains" value="A/B/C/D=1-293"/>
</dbReference>
<dbReference type="PDB" id="4AHP">
    <property type="method" value="X-ray"/>
    <property type="resolution" value="2.10 A"/>
    <property type="chains" value="A/B/C/D=2-293"/>
</dbReference>
<dbReference type="PDB" id="4AHQ">
    <property type="method" value="X-ray"/>
    <property type="resolution" value="1.95 A"/>
    <property type="chains" value="A/B/C/D=2-293"/>
</dbReference>
<dbReference type="PDB" id="4AMA">
    <property type="method" value="X-ray"/>
    <property type="resolution" value="2.35 A"/>
    <property type="chains" value="A/B/C/D=2-293"/>
</dbReference>
<dbReference type="PDB" id="5A8G">
    <property type="method" value="X-ray"/>
    <property type="resolution" value="1.72 A"/>
    <property type="chains" value="A/B=2-293"/>
</dbReference>
<dbReference type="PDB" id="5KZD">
    <property type="method" value="X-ray"/>
    <property type="resolution" value="2.33 A"/>
    <property type="chains" value="A/B/C/D=1-293"/>
</dbReference>
<dbReference type="PDB" id="5KZE">
    <property type="method" value="X-ray"/>
    <property type="resolution" value="1.74 A"/>
    <property type="chains" value="A/B/C/D/E/F/G/H=1-293"/>
</dbReference>
<dbReference type="PDB" id="5LKY">
    <property type="method" value="X-ray"/>
    <property type="resolution" value="1.70 A"/>
    <property type="chains" value="A/B/C/D=2-293"/>
</dbReference>
<dbReference type="PDBsum" id="4AH7"/>
<dbReference type="PDBsum" id="4AHO"/>
<dbReference type="PDBsum" id="4AHP"/>
<dbReference type="PDBsum" id="4AHQ"/>
<dbReference type="PDBsum" id="4AMA"/>
<dbReference type="PDBsum" id="5A8G"/>
<dbReference type="PDBsum" id="5KZD"/>
<dbReference type="PDBsum" id="5KZE"/>
<dbReference type="PDBsum" id="5LKY"/>
<dbReference type="SMR" id="Q2G160"/>
<dbReference type="STRING" id="93061.SAOUHSC_00295"/>
<dbReference type="PaxDb" id="1280-SAXN108_0299"/>
<dbReference type="GeneID" id="3918976"/>
<dbReference type="KEGG" id="sao:SAOUHSC_00295"/>
<dbReference type="PATRIC" id="fig|93061.5.peg.268"/>
<dbReference type="eggNOG" id="COG0329">
    <property type="taxonomic scope" value="Bacteria"/>
</dbReference>
<dbReference type="HOGENOM" id="CLU_049343_5_1_9"/>
<dbReference type="OrthoDB" id="9782828at2"/>
<dbReference type="BRENDA" id="4.1.3.3">
    <property type="organism ID" value="3352"/>
</dbReference>
<dbReference type="UniPathway" id="UPA00629">
    <property type="reaction ID" value="UER00680"/>
</dbReference>
<dbReference type="EvolutionaryTrace" id="Q2G160"/>
<dbReference type="PRO" id="PR:Q2G160"/>
<dbReference type="Proteomes" id="UP000008816">
    <property type="component" value="Chromosome"/>
</dbReference>
<dbReference type="GO" id="GO:0005829">
    <property type="term" value="C:cytosol"/>
    <property type="evidence" value="ECO:0000318"/>
    <property type="project" value="GO_Central"/>
</dbReference>
<dbReference type="GO" id="GO:0008747">
    <property type="term" value="F:N-acetylneuraminate lyase activity"/>
    <property type="evidence" value="ECO:0000318"/>
    <property type="project" value="GO_Central"/>
</dbReference>
<dbReference type="GO" id="GO:0005975">
    <property type="term" value="P:carbohydrate metabolic process"/>
    <property type="evidence" value="ECO:0007669"/>
    <property type="project" value="UniProtKB-UniRule"/>
</dbReference>
<dbReference type="GO" id="GO:0019262">
    <property type="term" value="P:N-acetylneuraminate catabolic process"/>
    <property type="evidence" value="ECO:0000318"/>
    <property type="project" value="GO_Central"/>
</dbReference>
<dbReference type="CDD" id="cd00954">
    <property type="entry name" value="NAL"/>
    <property type="match status" value="1"/>
</dbReference>
<dbReference type="FunFam" id="3.20.20.70:FF:000039">
    <property type="entry name" value="N-acetylneuraminate lyase"/>
    <property type="match status" value="1"/>
</dbReference>
<dbReference type="Gene3D" id="3.20.20.70">
    <property type="entry name" value="Aldolase class I"/>
    <property type="match status" value="1"/>
</dbReference>
<dbReference type="HAMAP" id="MF_01237">
    <property type="entry name" value="N_acetylneuram_lyase"/>
    <property type="match status" value="1"/>
</dbReference>
<dbReference type="InterPro" id="IPR013785">
    <property type="entry name" value="Aldolase_TIM"/>
</dbReference>
<dbReference type="InterPro" id="IPR002220">
    <property type="entry name" value="DapA-like"/>
</dbReference>
<dbReference type="InterPro" id="IPR005264">
    <property type="entry name" value="NanA"/>
</dbReference>
<dbReference type="InterPro" id="IPR020625">
    <property type="entry name" value="Schiff_base-form_aldolases_AS"/>
</dbReference>
<dbReference type="NCBIfam" id="NF003164">
    <property type="entry name" value="PRK04147.1"/>
    <property type="match status" value="1"/>
</dbReference>
<dbReference type="PANTHER" id="PTHR42849">
    <property type="entry name" value="N-ACETYLNEURAMINATE LYASE"/>
    <property type="match status" value="1"/>
</dbReference>
<dbReference type="PANTHER" id="PTHR42849:SF1">
    <property type="entry name" value="N-ACETYLNEURAMINATE LYASE"/>
    <property type="match status" value="1"/>
</dbReference>
<dbReference type="Pfam" id="PF00701">
    <property type="entry name" value="DHDPS"/>
    <property type="match status" value="1"/>
</dbReference>
<dbReference type="PIRSF" id="PIRSF001365">
    <property type="entry name" value="DHDPS"/>
    <property type="match status" value="1"/>
</dbReference>
<dbReference type="PRINTS" id="PR00146">
    <property type="entry name" value="DHPICSNTHASE"/>
</dbReference>
<dbReference type="SMART" id="SM01130">
    <property type="entry name" value="DHDPS"/>
    <property type="match status" value="1"/>
</dbReference>
<dbReference type="SUPFAM" id="SSF51569">
    <property type="entry name" value="Aldolase"/>
    <property type="match status" value="1"/>
</dbReference>
<dbReference type="PROSITE" id="PS00666">
    <property type="entry name" value="DHDPS_2"/>
    <property type="match status" value="1"/>
</dbReference>
<organism>
    <name type="scientific">Staphylococcus aureus (strain NCTC 8325 / PS 47)</name>
    <dbReference type="NCBI Taxonomy" id="93061"/>
    <lineage>
        <taxon>Bacteria</taxon>
        <taxon>Bacillati</taxon>
        <taxon>Bacillota</taxon>
        <taxon>Bacilli</taxon>
        <taxon>Bacillales</taxon>
        <taxon>Staphylococcaceae</taxon>
        <taxon>Staphylococcus</taxon>
    </lineage>
</organism>
<feature type="chain" id="PRO_1000066938" description="N-acetylneuraminate lyase">
    <location>
        <begin position="1"/>
        <end position="293"/>
    </location>
</feature>
<feature type="active site" description="Proton donor" evidence="1">
    <location>
        <position position="137"/>
    </location>
</feature>
<feature type="active site" description="Schiff-base intermediate with substrate" evidence="1 2">
    <location>
        <position position="165"/>
    </location>
</feature>
<feature type="binding site" evidence="7 14">
    <location>
        <position position="48"/>
    </location>
    <ligand>
        <name>aceneuramate</name>
        <dbReference type="ChEBI" id="CHEBI:173083"/>
    </ligand>
</feature>
<feature type="binding site" evidence="7 14">
    <location>
        <position position="49"/>
    </location>
    <ligand>
        <name>aceneuramate</name>
        <dbReference type="ChEBI" id="CHEBI:173083"/>
    </ligand>
</feature>
<feature type="binding site" evidence="7 14">
    <location>
        <position position="189"/>
    </location>
    <ligand>
        <name>aceneuramate</name>
        <dbReference type="ChEBI" id="CHEBI:173083"/>
    </ligand>
</feature>
<feature type="binding site" evidence="7 14">
    <location>
        <position position="191"/>
    </location>
    <ligand>
        <name>aceneuramate</name>
        <dbReference type="ChEBI" id="CHEBI:173083"/>
    </ligand>
</feature>
<feature type="binding site" evidence="7 14">
    <location>
        <position position="192"/>
    </location>
    <ligand>
        <name>aceneuramate</name>
        <dbReference type="ChEBI" id="CHEBI:173083"/>
    </ligand>
</feature>
<feature type="binding site" evidence="7 14">
    <location>
        <position position="208"/>
    </location>
    <ligand>
        <name>aceneuramate</name>
        <dbReference type="ChEBI" id="CHEBI:173083"/>
    </ligand>
</feature>
<feature type="binding site" evidence="7 14">
    <location>
        <position position="252"/>
    </location>
    <ligand>
        <name>aceneuramate</name>
        <dbReference type="ChEBI" id="CHEBI:173083"/>
    </ligand>
</feature>
<feature type="mutagenesis site" description="3125-fold decrease in catalytic activity, and 3-fold increase in substrate affinity." evidence="2">
    <original>K</original>
    <variation>C</variation>
    <location>
        <position position="165"/>
    </location>
</feature>
<feature type="mutagenesis site" description="Increases reaction with fluoropyruvate and the alternative substrate (2R,3S)-2,3-dihydroxy-4-oxo-N,N-dipropylbutanamide (DHOB)." evidence="3">
    <original>E</original>
    <variation>N</variation>
    <location>
        <position position="192"/>
    </location>
</feature>
<feature type="strand" evidence="18">
    <location>
        <begin position="7"/>
        <end position="11"/>
    </location>
</feature>
<feature type="helix" evidence="18">
    <location>
        <begin position="24"/>
        <end position="36"/>
    </location>
</feature>
<feature type="strand" evidence="18">
    <location>
        <begin position="41"/>
        <end position="47"/>
    </location>
</feature>
<feature type="helix" evidence="18">
    <location>
        <begin position="48"/>
        <end position="50"/>
    </location>
</feature>
<feature type="helix" evidence="18">
    <location>
        <begin position="52"/>
        <end position="54"/>
    </location>
</feature>
<feature type="helix" evidence="18">
    <location>
        <begin position="57"/>
        <end position="70"/>
    </location>
</feature>
<feature type="strand" evidence="18">
    <location>
        <begin position="75"/>
        <end position="80"/>
    </location>
</feature>
<feature type="helix" evidence="18">
    <location>
        <begin position="86"/>
        <end position="99"/>
    </location>
</feature>
<feature type="strand" evidence="18">
    <location>
        <begin position="102"/>
        <end position="107"/>
    </location>
</feature>
<feature type="helix" evidence="18">
    <location>
        <begin position="116"/>
        <end position="130"/>
    </location>
</feature>
<feature type="strand" evidence="18">
    <location>
        <begin position="134"/>
        <end position="138"/>
    </location>
</feature>
<feature type="helix" evidence="18">
    <location>
        <begin position="140"/>
        <end position="143"/>
    </location>
</feature>
<feature type="helix" evidence="18">
    <location>
        <begin position="149"/>
        <end position="156"/>
    </location>
</feature>
<feature type="strand" evidence="18">
    <location>
        <begin position="161"/>
        <end position="166"/>
    </location>
</feature>
<feature type="helix" evidence="18">
    <location>
        <begin position="171"/>
        <end position="180"/>
    </location>
</feature>
<feature type="strand" evidence="18">
    <location>
        <begin position="184"/>
        <end position="188"/>
    </location>
</feature>
<feature type="helix" evidence="17">
    <location>
        <begin position="191"/>
        <end position="193"/>
    </location>
</feature>
<feature type="helix" evidence="18">
    <location>
        <begin position="194"/>
        <end position="199"/>
    </location>
</feature>
<feature type="strand" evidence="18">
    <location>
        <begin position="203"/>
        <end position="208"/>
    </location>
</feature>
<feature type="helix" evidence="18">
    <location>
        <begin position="210"/>
        <end position="225"/>
    </location>
</feature>
<feature type="helix" evidence="18">
    <location>
        <begin position="229"/>
        <end position="249"/>
    </location>
</feature>
<feature type="helix" evidence="18">
    <location>
        <begin position="251"/>
        <end position="261"/>
    </location>
</feature>
<feature type="helix" evidence="18">
    <location>
        <begin position="278"/>
        <end position="280"/>
    </location>
</feature>
<feature type="helix" evidence="18">
    <location>
        <begin position="281"/>
        <end position="291"/>
    </location>
</feature>
<keyword id="KW-0002">3D-structure</keyword>
<keyword id="KW-0119">Carbohydrate metabolism</keyword>
<keyword id="KW-0963">Cytoplasm</keyword>
<keyword id="KW-0456">Lyase</keyword>
<keyword id="KW-1185">Reference proteome</keyword>
<keyword id="KW-0704">Schiff base</keyword>